<keyword id="KW-0496">Mitochondrion</keyword>
<keyword id="KW-1185">Reference proteome</keyword>
<keyword id="KW-0687">Ribonucleoprotein</keyword>
<keyword id="KW-0689">Ribosomal protein</keyword>
<accession>Q23886</accession>
<accession>Q9XPJ4</accession>
<evidence type="ECO:0000305" key="1"/>
<geneLocation type="mitochondrion"/>
<proteinExistence type="inferred from homology"/>
<comment type="subcellular location">
    <subcellularLocation>
        <location>Mitochondrion</location>
    </subcellularLocation>
</comment>
<comment type="similarity">
    <text evidence="1">Belongs to the universal ribosomal protein uS12 family.</text>
</comment>
<organism>
    <name type="scientific">Dictyostelium discoideum</name>
    <name type="common">Social amoeba</name>
    <dbReference type="NCBI Taxonomy" id="44689"/>
    <lineage>
        <taxon>Eukaryota</taxon>
        <taxon>Amoebozoa</taxon>
        <taxon>Evosea</taxon>
        <taxon>Eumycetozoa</taxon>
        <taxon>Dictyostelia</taxon>
        <taxon>Dictyosteliales</taxon>
        <taxon>Dictyosteliaceae</taxon>
        <taxon>Dictyostelium</taxon>
    </lineage>
</organism>
<gene>
    <name type="primary">mrps12</name>
    <name type="synonym">rps12</name>
    <name type="ORF">DDB_G0294074</name>
</gene>
<name>RT12_DICDI</name>
<dbReference type="EMBL" id="D21196">
    <property type="protein sequence ID" value="BAA04735.1"/>
    <property type="molecule type" value="Genomic_DNA"/>
</dbReference>
<dbReference type="EMBL" id="AB000109">
    <property type="protein sequence ID" value="BAA78071.1"/>
    <property type="molecule type" value="Genomic_DNA"/>
</dbReference>
<dbReference type="PIR" id="T43768">
    <property type="entry name" value="T43768"/>
</dbReference>
<dbReference type="RefSeq" id="NP_050089.1">
    <property type="nucleotide sequence ID" value="NC_000895.1"/>
</dbReference>
<dbReference type="SMR" id="Q23886"/>
<dbReference type="FunCoup" id="Q23886">
    <property type="interactions" value="72"/>
</dbReference>
<dbReference type="STRING" id="44689.Q23886"/>
<dbReference type="GeneID" id="2193917"/>
<dbReference type="KEGG" id="ddi:DidioMp22"/>
<dbReference type="dictyBase" id="DDB_G0294074">
    <property type="gene designation" value="mrps12"/>
</dbReference>
<dbReference type="VEuPathDB" id="AmoebaDB:DidioMp22"/>
<dbReference type="InParanoid" id="Q23886"/>
<dbReference type="OMA" id="VCIRVYT"/>
<dbReference type="PhylomeDB" id="Q23886"/>
<dbReference type="PRO" id="PR:Q23886"/>
<dbReference type="Proteomes" id="UP000002195">
    <property type="component" value="Mitochondrion"/>
</dbReference>
<dbReference type="GO" id="GO:0005739">
    <property type="term" value="C:mitochondrion"/>
    <property type="evidence" value="ECO:0007669"/>
    <property type="project" value="UniProtKB-SubCell"/>
</dbReference>
<dbReference type="GO" id="GO:0005840">
    <property type="term" value="C:ribosome"/>
    <property type="evidence" value="ECO:0000318"/>
    <property type="project" value="GO_Central"/>
</dbReference>
<dbReference type="GO" id="GO:0015935">
    <property type="term" value="C:small ribosomal subunit"/>
    <property type="evidence" value="ECO:0007669"/>
    <property type="project" value="InterPro"/>
</dbReference>
<dbReference type="GO" id="GO:0003735">
    <property type="term" value="F:structural constituent of ribosome"/>
    <property type="evidence" value="ECO:0000318"/>
    <property type="project" value="GO_Central"/>
</dbReference>
<dbReference type="GO" id="GO:0006412">
    <property type="term" value="P:translation"/>
    <property type="evidence" value="ECO:0000318"/>
    <property type="project" value="GO_Central"/>
</dbReference>
<dbReference type="CDD" id="cd03368">
    <property type="entry name" value="Ribosomal_S12"/>
    <property type="match status" value="1"/>
</dbReference>
<dbReference type="FunFam" id="2.40.50.140:FF:000192">
    <property type="entry name" value="Mitochondrial ribosomal protein S12"/>
    <property type="match status" value="1"/>
</dbReference>
<dbReference type="Gene3D" id="2.40.50.140">
    <property type="entry name" value="Nucleic acid-binding proteins"/>
    <property type="match status" value="1"/>
</dbReference>
<dbReference type="InterPro" id="IPR012340">
    <property type="entry name" value="NA-bd_OB-fold"/>
</dbReference>
<dbReference type="InterPro" id="IPR006032">
    <property type="entry name" value="Ribosomal_uS12"/>
</dbReference>
<dbReference type="InterPro" id="IPR005679">
    <property type="entry name" value="Ribosomal_uS12_bac"/>
</dbReference>
<dbReference type="NCBIfam" id="TIGR00981">
    <property type="entry name" value="rpsL_bact"/>
    <property type="match status" value="1"/>
</dbReference>
<dbReference type="PANTHER" id="PTHR11652">
    <property type="entry name" value="30S RIBOSOMAL PROTEIN S12 FAMILY MEMBER"/>
    <property type="match status" value="1"/>
</dbReference>
<dbReference type="Pfam" id="PF00164">
    <property type="entry name" value="Ribosom_S12_S23"/>
    <property type="match status" value="1"/>
</dbReference>
<dbReference type="PIRSF" id="PIRSF002133">
    <property type="entry name" value="Ribosomal_S12/S23"/>
    <property type="match status" value="1"/>
</dbReference>
<dbReference type="PRINTS" id="PR01034">
    <property type="entry name" value="RIBOSOMALS12"/>
</dbReference>
<dbReference type="SUPFAM" id="SSF50249">
    <property type="entry name" value="Nucleic acid-binding proteins"/>
    <property type="match status" value="1"/>
</dbReference>
<dbReference type="PROSITE" id="PS00055">
    <property type="entry name" value="RIBOSOMAL_S12"/>
    <property type="match status" value="1"/>
</dbReference>
<sequence>MITINQITDRKARGPKKKRKTLLTGYPQKKGYCMRVYETKPKKPNSAIRKVAKVTIKLKNKRKNLIAYIPGFGPHNLQPLSTVLVKGGRCQDLPGVKYRLVRKHYDFLAAERFVRKNRRSKFSVKNLETKAKKGKAVRIE</sequence>
<protein>
    <recommendedName>
        <fullName evidence="1">Small ribosomal subunit protein uS12m</fullName>
    </recommendedName>
    <alternativeName>
        <fullName>Ribosomal protein S12, mitochondrial</fullName>
        <shortName>MRP-S12</shortName>
        <shortName>S12mt</shortName>
    </alternativeName>
</protein>
<feature type="chain" id="PRO_0000312374" description="Small ribosomal subunit protein uS12m">
    <location>
        <begin position="1"/>
        <end position="140"/>
    </location>
</feature>
<reference key="1">
    <citation type="journal article" date="1998" name="Curr. Genet.">
        <title>A ribosomal protein gene cluster is encoded in the mitochondrial DNA of Dictyostelium discoideum: UGA termination codons and similarity of gene order to Acanthamoeba castellanii.</title>
        <authorList>
            <person name="Iwamoto M."/>
            <person name="Pi M."/>
            <person name="Kurihara M."/>
            <person name="Morio T."/>
            <person name="Tanaka Y."/>
        </authorList>
    </citation>
    <scope>NUCLEOTIDE SEQUENCE [GENOMIC DNA]</scope>
    <source>
        <strain>AX3</strain>
    </source>
</reference>
<reference key="2">
    <citation type="journal article" date="2000" name="Mol. Gen. Genet.">
        <title>The mitochondrial DNA of Dictyostelium discoideum: complete sequence, gene content and genome organization.</title>
        <authorList>
            <person name="Ogawa S."/>
            <person name="Yoshino R."/>
            <person name="Angata K."/>
            <person name="Iwamoto M."/>
            <person name="Pi M."/>
            <person name="Kuroe K."/>
            <person name="Matsuo K."/>
            <person name="Morio T."/>
            <person name="Urushihara H."/>
            <person name="Yanagisawa K."/>
            <person name="Tanaka Y."/>
        </authorList>
    </citation>
    <scope>NUCLEOTIDE SEQUENCE [LARGE SCALE GENOMIC DNA]</scope>
    <source>
        <strain>AX3</strain>
    </source>
</reference>